<proteinExistence type="evidence at transcript level"/>
<feature type="signal peptide" evidence="2">
    <location>
        <begin position="1"/>
        <end position="26"/>
    </location>
</feature>
<feature type="propeptide" id="PRO_0000457218" description="Removed in mature form" evidence="1">
    <location>
        <begin position="27"/>
        <end status="unknown"/>
    </location>
</feature>
<feature type="peptide" id="PRO_0000457219" description="Serine rich endogenous peptide 3" evidence="1">
    <location>
        <begin status="unknown"/>
        <end position="53"/>
    </location>
</feature>
<feature type="short sequence motif" description="SCOOP motif" evidence="7">
    <location>
        <begin position="37"/>
        <end position="53"/>
    </location>
</feature>
<feature type="short sequence motif" description="SxS motif essential for MIK2 binding" evidence="1">
    <location>
        <begin position="49"/>
        <end position="51"/>
    </location>
</feature>
<organism>
    <name type="scientific">Arabidopsis thaliana</name>
    <name type="common">Mouse-ear cress</name>
    <dbReference type="NCBI Taxonomy" id="3702"/>
    <lineage>
        <taxon>Eukaryota</taxon>
        <taxon>Viridiplantae</taxon>
        <taxon>Streptophyta</taxon>
        <taxon>Embryophyta</taxon>
        <taxon>Tracheophyta</taxon>
        <taxon>Spermatophyta</taxon>
        <taxon>Magnoliopsida</taxon>
        <taxon>eudicotyledons</taxon>
        <taxon>Gunneridae</taxon>
        <taxon>Pentapetalae</taxon>
        <taxon>rosids</taxon>
        <taxon>malvids</taxon>
        <taxon>Brassicales</taxon>
        <taxon>Brassicaceae</taxon>
        <taxon>Camelineae</taxon>
        <taxon>Arabidopsis</taxon>
    </lineage>
</organism>
<dbReference type="EMBL" id="AB024024">
    <property type="status" value="NOT_ANNOTATED_CDS"/>
    <property type="molecule type" value="Genomic_DNA"/>
</dbReference>
<dbReference type="EMBL" id="CP002688">
    <property type="status" value="NOT_ANNOTATED_CDS"/>
    <property type="molecule type" value="Genomic_DNA"/>
</dbReference>
<dbReference type="EMBL" id="BX832756">
    <property type="status" value="NOT_ANNOTATED_CDS"/>
    <property type="molecule type" value="mRNA"/>
</dbReference>
<dbReference type="EMBL" id="CB253842">
    <property type="status" value="NOT_ANNOTATED_CDS"/>
    <property type="molecule type" value="mRNA"/>
</dbReference>
<dbReference type="Araport" id="AT5G00585"/>
<dbReference type="TAIR" id="AT5G00585"/>
<dbReference type="PRO" id="PR:P0DO60"/>
<dbReference type="Proteomes" id="UP000006548">
    <property type="component" value="Chromosome 5"/>
</dbReference>
<dbReference type="GO" id="GO:0048046">
    <property type="term" value="C:apoplast"/>
    <property type="evidence" value="ECO:0000250"/>
    <property type="project" value="UniProtKB"/>
</dbReference>
<dbReference type="GO" id="GO:0005886">
    <property type="term" value="C:plasma membrane"/>
    <property type="evidence" value="ECO:0007669"/>
    <property type="project" value="UniProtKB-SubCell"/>
</dbReference>
<dbReference type="GO" id="GO:0030275">
    <property type="term" value="F:LRR domain binding"/>
    <property type="evidence" value="ECO:0000250"/>
    <property type="project" value="UniProtKB"/>
</dbReference>
<dbReference type="GO" id="GO:0033612">
    <property type="term" value="F:receptor serine/threonine kinase binding"/>
    <property type="evidence" value="ECO:0000250"/>
    <property type="project" value="UniProtKB"/>
</dbReference>
<dbReference type="GO" id="GO:0009625">
    <property type="term" value="P:response to insect"/>
    <property type="evidence" value="ECO:0000270"/>
    <property type="project" value="UniProtKB"/>
</dbReference>
<dbReference type="GO" id="GO:0009611">
    <property type="term" value="P:response to wounding"/>
    <property type="evidence" value="ECO:0000270"/>
    <property type="project" value="UniProtKB"/>
</dbReference>
<gene>
    <name evidence="4" type="primary">PROSCOOP3</name>
    <name evidence="5 6" type="synonym">SCOOP3</name>
    <name evidence="8" type="ordered locus">At5g00585</name>
    <name evidence="9" type="ORF">K15C23</name>
</gene>
<name>SCOP3_ARATH</name>
<sequence>MTKKGPLNLRLLLLLLVVLLPSCSNCALTSSQELRPSSEWRRKMITVWSKSSY</sequence>
<evidence type="ECO:0000250" key="1">
    <source>
        <dbReference type="UniProtKB" id="B3H7I1"/>
    </source>
</evidence>
<evidence type="ECO:0000255" key="2"/>
<evidence type="ECO:0000269" key="3">
    <source>
    </source>
</evidence>
<evidence type="ECO:0000303" key="4">
    <source>
    </source>
</evidence>
<evidence type="ECO:0000303" key="5">
    <source>
    </source>
</evidence>
<evidence type="ECO:0000303" key="6">
    <source>
    </source>
</evidence>
<evidence type="ECO:0000305" key="7"/>
<evidence type="ECO:0000312" key="8">
    <source>
        <dbReference type="Araport" id="AT5G00585"/>
    </source>
</evidence>
<evidence type="ECO:0000312" key="9">
    <source>
        <dbReference type="EMBL" id="AB024024"/>
    </source>
</evidence>
<keyword id="KW-0052">Apoplast</keyword>
<keyword id="KW-1003">Cell membrane</keyword>
<keyword id="KW-0165">Cleavage on pair of basic residues</keyword>
<keyword id="KW-0472">Membrane</keyword>
<keyword id="KW-1185">Reference proteome</keyword>
<keyword id="KW-0964">Secreted</keyword>
<keyword id="KW-0732">Signal</keyword>
<accession>P0DO60</accession>
<protein>
    <recommendedName>
        <fullName evidence="4">Serine rich endogenous peptide 3</fullName>
        <shortName evidence="4">AtSCOOP3</shortName>
    </recommendedName>
    <alternativeName>
        <fullName evidence="4">Phytocytokine SCOOP3</fullName>
    </alternativeName>
    <alternativeName>
        <fullName evidence="4">Probable precursor of serine rich endogenous peptide phytocytokine 3</fullName>
    </alternativeName>
</protein>
<reference key="1">
    <citation type="submission" date="1999-02" db="EMBL/GenBank/DDBJ databases">
        <title>Structural analysis of Arabidopsis thaliana chromosome 5. XI.</title>
        <authorList>
            <person name="Kaneko T."/>
            <person name="Katoh T."/>
            <person name="Asamizu E."/>
            <person name="Sato S."/>
            <person name="Nakamura Y."/>
            <person name="Kotani H."/>
            <person name="Tabata S."/>
        </authorList>
    </citation>
    <scope>NUCLEOTIDE SEQUENCE [LARGE SCALE GENOMIC DNA]</scope>
    <source>
        <strain>cv. Columbia</strain>
    </source>
</reference>
<reference key="2">
    <citation type="journal article" date="2017" name="Plant J.">
        <title>Araport11: a complete reannotation of the Arabidopsis thaliana reference genome.</title>
        <authorList>
            <person name="Cheng C.Y."/>
            <person name="Krishnakumar V."/>
            <person name="Chan A.P."/>
            <person name="Thibaud-Nissen F."/>
            <person name="Schobel S."/>
            <person name="Town C.D."/>
        </authorList>
    </citation>
    <scope>GENOME REANNOTATION</scope>
    <source>
        <strain>cv. Columbia</strain>
    </source>
</reference>
<reference key="3">
    <citation type="journal article" date="2004" name="Genome Res.">
        <title>Whole genome sequence comparisons and 'full-length' cDNA sequences: a combined approach to evaluate and improve Arabidopsis genome annotation.</title>
        <authorList>
            <person name="Castelli V."/>
            <person name="Aury J.-M."/>
            <person name="Jaillon O."/>
            <person name="Wincker P."/>
            <person name="Clepet C."/>
            <person name="Menard M."/>
            <person name="Cruaud C."/>
            <person name="Quetier F."/>
            <person name="Scarpelli C."/>
            <person name="Schaechter V."/>
            <person name="Temple G."/>
            <person name="Caboche M."/>
            <person name="Weissenbach J."/>
            <person name="Salanoubat M."/>
        </authorList>
    </citation>
    <scope>NUCLEOTIDE SEQUENCE [LARGE SCALE MRNA]</scope>
    <source>
        <strain>cv. Columbia</strain>
    </source>
</reference>
<reference key="4">
    <citation type="submission" date="2005-01" db="EMBL/GenBank/DDBJ databases">
        <title>Arabidopsis thaliana cDNA library enriched in transcription factors.</title>
        <authorList>
            <person name="Jakoby M."/>
            <person name="Stracke R."/>
            <person name="Soerensen T.R."/>
            <person name="Weisshaar B."/>
        </authorList>
    </citation>
    <scope>NUCLEOTIDE SEQUENCE [LARGE SCALE MRNA]</scope>
    <source>
        <strain>cv. At-7</strain>
        <tissue>Hypocotyl</tissue>
    </source>
</reference>
<reference key="5">
    <citation type="journal article" date="2019" name="J. Exp. Bot.">
        <title>The SCOOP12 peptide regulates defense response and root elongation in Arabidopsis thaliana.</title>
        <authorList>
            <person name="Gully K."/>
            <person name="Pelletier S."/>
            <person name="Guillou M.-C."/>
            <person name="Ferrand M."/>
            <person name="Aligon S."/>
            <person name="Pokotylo I."/>
            <person name="Perrin A."/>
            <person name="Vergne E."/>
            <person name="Fagard M."/>
            <person name="Ruelland E."/>
            <person name="Grappin P."/>
            <person name="Bucher E."/>
            <person name="Renou J.-P."/>
            <person name="Aubourg S."/>
        </authorList>
    </citation>
    <scope>GENE FAMILY</scope>
    <source>
        <strain>cv. Columbia</strain>
        <strain>cv. Wassilewskija</strain>
    </source>
</reference>
<reference key="6">
    <citation type="journal article" date="2021" name="Nat. Commun.">
        <title>Perception of a divergent family of phytocytokines by the Arabidopsis receptor kinase MIK2.</title>
        <authorList>
            <person name="Rhodes J."/>
            <person name="Yang H."/>
            <person name="Moussu S."/>
            <person name="Boutrot F."/>
            <person name="Santiago J."/>
            <person name="Zipfel C."/>
        </authorList>
    </citation>
    <scope>GENE FAMILY</scope>
    <source>
        <strain>cv. Columbia</strain>
        <strain>cv. Wassilewskija-2</strain>
    </source>
</reference>
<reference key="7">
    <citation type="journal article" date="2021" name="Nat. Commun.">
        <title>The Arabidopsis MIK2 receptor elicits immunity by sensing a conserved signature from phytocytokines and microbes.</title>
        <authorList>
            <person name="Hou S."/>
            <person name="Liu D."/>
            <person name="Huang S."/>
            <person name="Luo D."/>
            <person name="Liu Z."/>
            <person name="Xiang Q."/>
            <person name="Wang P."/>
            <person name="Mu R."/>
            <person name="Han Z."/>
            <person name="Chen S."/>
            <person name="Chai J."/>
            <person name="Shan L."/>
            <person name="He P."/>
        </authorList>
    </citation>
    <scope>GENE FAMILY</scope>
    <scope>NOMENCLATURE</scope>
    <source>
        <strain>cv. Columbia</strain>
    </source>
</reference>
<reference key="8">
    <citation type="journal article" date="2022" name="Front. Plant Sci.">
        <title>The MIK2/SCOOP signaling system contributes to Arabidopsis resistance against herbivory by modulating jasmonate and indole glucosinolate biosynthesis.</title>
        <authorList>
            <person name="Stahl E."/>
            <person name="Fernandez Martin A."/>
            <person name="Glauser G."/>
            <person name="Guillou M.-C."/>
            <person name="Aubourg S."/>
            <person name="Renou J.-P."/>
            <person name="Reymond P."/>
        </authorList>
    </citation>
    <scope>INDUCTION BY INSECT HERBIVORY</scope>
    <source>
        <strain>cv. Columbia</strain>
        <strain>cv. Wassilewskija</strain>
    </source>
</reference>
<comment type="function">
    <text evidence="1">Brassicaceae-specific phytocytokine (plant endogenous peptide released into the apoplast) perceived by MIK2 in a BAK1/SERK3 and SERK4 coreceptors-dependent manner, that modulates various physiological and antimicrobial processes including growth prevention and reactive oxygen species (ROS) response regulation.</text>
</comment>
<comment type="subunit">
    <text evidence="1">Interacts with MIK2 (via extracellular leucine-rich repeat domain); this interaction triggers the formation of complex between MIK2 and the BAK1/SERK3 and SERK4 coreceptors, and subsequent BAK1 activation by phosphorylation.</text>
</comment>
<comment type="subcellular location">
    <subcellularLocation>
        <location evidence="1">Cell membrane</location>
    </subcellularLocation>
    <subcellularLocation>
        <location evidence="1">Secreted</location>
        <location evidence="1">Extracellular space</location>
        <location evidence="1">Apoplast</location>
    </subcellularLocation>
    <text evidence="1">The precursor of SCOOP3, PROSCOOP3, accumulates at the plasma membrane and is proteolytically cleaved to release the SCOOP3 in the apoplasm.</text>
</comment>
<comment type="induction">
    <text evidence="3">Accumulates upon infection by generalist herbivores such as Spodoptera littoralis.</text>
</comment>
<comment type="similarity">
    <text evidence="7">Belongs to the serine rich endogenous peptide (SCOOP) phytocytokine family.</text>
</comment>
<comment type="sequence caution" evidence="7">
    <conflict type="frameshift">
        <sequence resource="EMBL" id="BX832756"/>
    </conflict>
</comment>